<accession>Q2MY48</accession>
<dbReference type="EC" id="3.1.1.-"/>
<dbReference type="EMBL" id="DQ274490">
    <property type="protein sequence ID" value="ABC55690.1"/>
    <property type="molecule type" value="mRNA"/>
</dbReference>
<dbReference type="SMR" id="Q2MY48"/>
<dbReference type="InParanoid" id="Q2MY48"/>
<dbReference type="Proteomes" id="UP000011115">
    <property type="component" value="Unassembled WGS sequence"/>
</dbReference>
<dbReference type="ExpressionAtlas" id="Q2MY48">
    <property type="expression patterns" value="baseline and differential"/>
</dbReference>
<dbReference type="GO" id="GO:0005773">
    <property type="term" value="C:vacuole"/>
    <property type="evidence" value="ECO:0007669"/>
    <property type="project" value="UniProtKB-SubCell"/>
</dbReference>
<dbReference type="GO" id="GO:0047372">
    <property type="term" value="F:monoacylglycerol lipase activity"/>
    <property type="evidence" value="ECO:0000318"/>
    <property type="project" value="GO_Central"/>
</dbReference>
<dbReference type="GO" id="GO:0045735">
    <property type="term" value="F:nutrient reservoir activity"/>
    <property type="evidence" value="ECO:0007669"/>
    <property type="project" value="UniProtKB-KW"/>
</dbReference>
<dbReference type="GO" id="GO:0004620">
    <property type="term" value="F:phospholipase activity"/>
    <property type="evidence" value="ECO:0000318"/>
    <property type="project" value="GO_Central"/>
</dbReference>
<dbReference type="GO" id="GO:0006952">
    <property type="term" value="P:defense response"/>
    <property type="evidence" value="ECO:0007669"/>
    <property type="project" value="UniProtKB-KW"/>
</dbReference>
<dbReference type="GO" id="GO:0016042">
    <property type="term" value="P:lipid catabolic process"/>
    <property type="evidence" value="ECO:0007669"/>
    <property type="project" value="UniProtKB-KW"/>
</dbReference>
<dbReference type="Gene3D" id="3.40.1090.10">
    <property type="entry name" value="Cytosolic phospholipase A2 catalytic domain"/>
    <property type="match status" value="1"/>
</dbReference>
<dbReference type="InterPro" id="IPR016035">
    <property type="entry name" value="Acyl_Trfase/lysoPLipase"/>
</dbReference>
<dbReference type="InterPro" id="IPR002641">
    <property type="entry name" value="PNPLA_dom"/>
</dbReference>
<dbReference type="PANTHER" id="PTHR32176:SF85">
    <property type="entry name" value="PATATIN GROUP D-2"/>
    <property type="match status" value="1"/>
</dbReference>
<dbReference type="PANTHER" id="PTHR32176">
    <property type="entry name" value="XYLOSE ISOMERASE"/>
    <property type="match status" value="1"/>
</dbReference>
<dbReference type="Pfam" id="PF01734">
    <property type="entry name" value="Patatin"/>
    <property type="match status" value="1"/>
</dbReference>
<dbReference type="SUPFAM" id="SSF52151">
    <property type="entry name" value="FabD/lysophospholipase-like"/>
    <property type="match status" value="1"/>
</dbReference>
<dbReference type="PROSITE" id="PS51635">
    <property type="entry name" value="PNPLA"/>
    <property type="match status" value="1"/>
</dbReference>
<comment type="function">
    <text evidence="1">Probable lipolytic acyl hydrolase (LAH), an activity which is thought to be involved in the response of tubers to pathogens.</text>
</comment>
<comment type="subcellular location">
    <subcellularLocation>
        <location evidence="1">Vacuole</location>
    </subcellularLocation>
</comment>
<comment type="tissue specificity">
    <text evidence="4">Tuber.</text>
</comment>
<comment type="developmental stage">
    <text evidence="4">Accumulates progressively during tuber formation from stolon.</text>
</comment>
<comment type="domain">
    <text>The nitrogen atoms of the two glycine residues in the GGXR motif define the oxyanion hole, and stabilize the oxyanion that forms during the nucleophilic attack by the catalytic serine during substrate cleavage.</text>
</comment>
<comment type="miscellaneous">
    <text>Patatin have a dual role as a somatic storage protein and as an enzyme involved in host resistance.</text>
</comment>
<comment type="similarity">
    <text evidence="5">Belongs to the patatin family.</text>
</comment>
<name>PAT03_SOLTU</name>
<proteinExistence type="evidence at transcript level"/>
<feature type="signal peptide" evidence="2">
    <location>
        <begin position="1"/>
        <end position="23"/>
    </location>
</feature>
<feature type="chain" id="PRO_0000296689" description="Patatin-03">
    <location>
        <begin position="24"/>
        <end position="387"/>
    </location>
</feature>
<feature type="domain" description="PNPLA" evidence="3">
    <location>
        <begin position="32"/>
        <end position="230"/>
    </location>
</feature>
<feature type="short sequence motif" description="GXGXXG" evidence="3">
    <location>
        <begin position="36"/>
        <end position="41"/>
    </location>
</feature>
<feature type="short sequence motif" description="GXSXG" evidence="3">
    <location>
        <begin position="75"/>
        <end position="79"/>
    </location>
</feature>
<feature type="short sequence motif" description="DGA/G" evidence="3">
    <location>
        <begin position="216"/>
        <end position="218"/>
    </location>
</feature>
<feature type="active site" description="Nucleophile" evidence="3">
    <location>
        <position position="77"/>
    </location>
</feature>
<feature type="active site" description="Proton acceptor" evidence="3">
    <location>
        <position position="216"/>
    </location>
</feature>
<feature type="glycosylation site" description="N-linked (GlcNAc...) asparagine" evidence="2">
    <location>
        <position position="115"/>
    </location>
</feature>
<feature type="glycosylation site" description="N-linked (GlcNAc...) asparagine" evidence="2">
    <location>
        <position position="203"/>
    </location>
</feature>
<protein>
    <recommendedName>
        <fullName>Patatin-03</fullName>
        <ecNumber>3.1.1.-</ecNumber>
    </recommendedName>
</protein>
<evidence type="ECO:0000250" key="1"/>
<evidence type="ECO:0000255" key="2"/>
<evidence type="ECO:0000255" key="3">
    <source>
        <dbReference type="PROSITE-ProRule" id="PRU01161"/>
    </source>
</evidence>
<evidence type="ECO:0000269" key="4">
    <source>
    </source>
</evidence>
<evidence type="ECO:0000305" key="5"/>
<reference key="1">
    <citation type="journal article" date="2006" name="Genetics">
        <title>Structural diversity and differential transcription of the patatin multicopy gene family during potato tuber development.</title>
        <authorList>
            <person name="Stupar R.M."/>
            <person name="Beaubien K.A."/>
            <person name="Jin W."/>
            <person name="Song J."/>
            <person name="Lee M.-K."/>
            <person name="Wu C."/>
            <person name="Zhang H.-B."/>
            <person name="Han B."/>
            <person name="Jiang J."/>
        </authorList>
    </citation>
    <scope>NUCLEOTIDE SEQUENCE [MRNA]</scope>
    <scope>DEVELOPMENTAL STAGE</scope>
    <scope>TISSUE SPECIFICITY</scope>
    <source>
        <strain>cv. Kennebec</strain>
    </source>
</reference>
<keyword id="KW-0325">Glycoprotein</keyword>
<keyword id="KW-0378">Hydrolase</keyword>
<keyword id="KW-0442">Lipid degradation</keyword>
<keyword id="KW-0443">Lipid metabolism</keyword>
<keyword id="KW-0611">Plant defense</keyword>
<keyword id="KW-1185">Reference proteome</keyword>
<keyword id="KW-0732">Signal</keyword>
<keyword id="KW-0758">Storage protein</keyword>
<keyword id="KW-0926">Vacuole</keyword>
<sequence length="387" mass="42556">MATTKSVLVLIFMILATTSSTFATLGEMVTVLSIDGGGIKGIIPGIILEFLEGQLQKMDNNADARLADYFDVIGGTSTGGLLTAMITTPNENNRPFAAAKDIVPFYFQHGPHIFNSSTGQFFGPKYDGKYLMQVLQEKLGETRVHQALTEVAISSFDIKTNKPVIFTKSNLARSPELDAKMSDICYSTAAAPTYFPPHYFATNTSNGDKYEFNLVDGAVATVADPALLSVSVATRRAEEDPAFASIRSLNYKQLLLLSLGTGTNSEFDKTHTAQETAKWGALQWMLVIQQMTEAASSYMTDYYLSTVFQDLHSQNNYLRVQENALTGTTTKADDASEANMELLVQVGENLLKKPVSKDNPETYEEALKRFAKLLSDRKKFRANKASY</sequence>
<organism>
    <name type="scientific">Solanum tuberosum</name>
    <name type="common">Potato</name>
    <dbReference type="NCBI Taxonomy" id="4113"/>
    <lineage>
        <taxon>Eukaryota</taxon>
        <taxon>Viridiplantae</taxon>
        <taxon>Streptophyta</taxon>
        <taxon>Embryophyta</taxon>
        <taxon>Tracheophyta</taxon>
        <taxon>Spermatophyta</taxon>
        <taxon>Magnoliopsida</taxon>
        <taxon>eudicotyledons</taxon>
        <taxon>Gunneridae</taxon>
        <taxon>Pentapetalae</taxon>
        <taxon>asterids</taxon>
        <taxon>lamiids</taxon>
        <taxon>Solanales</taxon>
        <taxon>Solanaceae</taxon>
        <taxon>Solanoideae</taxon>
        <taxon>Solaneae</taxon>
        <taxon>Solanum</taxon>
    </lineage>
</organism>